<organism>
    <name type="scientific">Nostoc punctiforme (strain ATCC 29133 / PCC 73102)</name>
    <dbReference type="NCBI Taxonomy" id="63737"/>
    <lineage>
        <taxon>Bacteria</taxon>
        <taxon>Bacillati</taxon>
        <taxon>Cyanobacteriota</taxon>
        <taxon>Cyanophyceae</taxon>
        <taxon>Nostocales</taxon>
        <taxon>Nostocaceae</taxon>
        <taxon>Nostoc</taxon>
    </lineage>
</organism>
<keyword id="KW-1185">Reference proteome</keyword>
<keyword id="KW-0687">Ribonucleoprotein</keyword>
<keyword id="KW-0689">Ribosomal protein</keyword>
<keyword id="KW-0694">RNA-binding</keyword>
<keyword id="KW-0699">rRNA-binding</keyword>
<keyword id="KW-0820">tRNA-binding</keyword>
<protein>
    <recommendedName>
        <fullName evidence="1">Large ribosomal subunit protein uL16</fullName>
    </recommendedName>
    <alternativeName>
        <fullName evidence="2">50S ribosomal protein L16</fullName>
    </alternativeName>
</protein>
<feature type="chain" id="PRO_1000143002" description="Large ribosomal subunit protein uL16">
    <location>
        <begin position="1"/>
        <end position="141"/>
    </location>
</feature>
<sequence>MLSPRRTKFRKQQRGRMEGLATRGSTLNFGDFALQAQEPAWITSRQIEASRRAMTRYIRRGGQIWIRIFPDKPVTMRPAETRMGSGKGNPEFWVAVVKPGRILFEIGGVSEEIAREAMRLASFKLPIKTKFIVRSQPQEQE</sequence>
<name>RL16_NOSP7</name>
<gene>
    <name evidence="1" type="primary">rplP</name>
    <name evidence="1" type="synonym">rpl16</name>
    <name type="ordered locus">Npun_R4383</name>
</gene>
<comment type="function">
    <text evidence="1">Binds 23S rRNA and is also seen to make contacts with the A and possibly P site tRNAs.</text>
</comment>
<comment type="subunit">
    <text evidence="1">Part of the 50S ribosomal subunit.</text>
</comment>
<comment type="similarity">
    <text evidence="1">Belongs to the universal ribosomal protein uL16 family.</text>
</comment>
<dbReference type="EMBL" id="CP001037">
    <property type="protein sequence ID" value="ACC82756.1"/>
    <property type="molecule type" value="Genomic_DNA"/>
</dbReference>
<dbReference type="RefSeq" id="WP_012410718.1">
    <property type="nucleotide sequence ID" value="NC_010628.1"/>
</dbReference>
<dbReference type="SMR" id="B2ITP8"/>
<dbReference type="STRING" id="63737.Npun_R4383"/>
<dbReference type="EnsemblBacteria" id="ACC82756">
    <property type="protein sequence ID" value="ACC82756"/>
    <property type="gene ID" value="Npun_R4383"/>
</dbReference>
<dbReference type="KEGG" id="npu:Npun_R4383"/>
<dbReference type="eggNOG" id="COG0197">
    <property type="taxonomic scope" value="Bacteria"/>
</dbReference>
<dbReference type="HOGENOM" id="CLU_078858_2_1_3"/>
<dbReference type="OrthoDB" id="9802589at2"/>
<dbReference type="PhylomeDB" id="B2ITP8"/>
<dbReference type="Proteomes" id="UP000001191">
    <property type="component" value="Chromosome"/>
</dbReference>
<dbReference type="GO" id="GO:0022625">
    <property type="term" value="C:cytosolic large ribosomal subunit"/>
    <property type="evidence" value="ECO:0007669"/>
    <property type="project" value="TreeGrafter"/>
</dbReference>
<dbReference type="GO" id="GO:0019843">
    <property type="term" value="F:rRNA binding"/>
    <property type="evidence" value="ECO:0007669"/>
    <property type="project" value="UniProtKB-UniRule"/>
</dbReference>
<dbReference type="GO" id="GO:0003735">
    <property type="term" value="F:structural constituent of ribosome"/>
    <property type="evidence" value="ECO:0007669"/>
    <property type="project" value="InterPro"/>
</dbReference>
<dbReference type="GO" id="GO:0000049">
    <property type="term" value="F:tRNA binding"/>
    <property type="evidence" value="ECO:0007669"/>
    <property type="project" value="UniProtKB-KW"/>
</dbReference>
<dbReference type="GO" id="GO:0006412">
    <property type="term" value="P:translation"/>
    <property type="evidence" value="ECO:0007669"/>
    <property type="project" value="UniProtKB-UniRule"/>
</dbReference>
<dbReference type="CDD" id="cd01433">
    <property type="entry name" value="Ribosomal_L16_L10e"/>
    <property type="match status" value="1"/>
</dbReference>
<dbReference type="FunFam" id="3.90.1170.10:FF:000001">
    <property type="entry name" value="50S ribosomal protein L16"/>
    <property type="match status" value="1"/>
</dbReference>
<dbReference type="Gene3D" id="3.90.1170.10">
    <property type="entry name" value="Ribosomal protein L10e/L16"/>
    <property type="match status" value="1"/>
</dbReference>
<dbReference type="HAMAP" id="MF_01342">
    <property type="entry name" value="Ribosomal_uL16"/>
    <property type="match status" value="1"/>
</dbReference>
<dbReference type="InterPro" id="IPR047873">
    <property type="entry name" value="Ribosomal_uL16"/>
</dbReference>
<dbReference type="InterPro" id="IPR000114">
    <property type="entry name" value="Ribosomal_uL16_bact-type"/>
</dbReference>
<dbReference type="InterPro" id="IPR020798">
    <property type="entry name" value="Ribosomal_uL16_CS"/>
</dbReference>
<dbReference type="InterPro" id="IPR016180">
    <property type="entry name" value="Ribosomal_uL16_dom"/>
</dbReference>
<dbReference type="InterPro" id="IPR036920">
    <property type="entry name" value="Ribosomal_uL16_sf"/>
</dbReference>
<dbReference type="NCBIfam" id="TIGR01164">
    <property type="entry name" value="rplP_bact"/>
    <property type="match status" value="1"/>
</dbReference>
<dbReference type="PANTHER" id="PTHR12220">
    <property type="entry name" value="50S/60S RIBOSOMAL PROTEIN L16"/>
    <property type="match status" value="1"/>
</dbReference>
<dbReference type="PANTHER" id="PTHR12220:SF13">
    <property type="entry name" value="LARGE RIBOSOMAL SUBUNIT PROTEIN UL16M"/>
    <property type="match status" value="1"/>
</dbReference>
<dbReference type="Pfam" id="PF00252">
    <property type="entry name" value="Ribosomal_L16"/>
    <property type="match status" value="1"/>
</dbReference>
<dbReference type="PRINTS" id="PR00060">
    <property type="entry name" value="RIBOSOMALL16"/>
</dbReference>
<dbReference type="SUPFAM" id="SSF54686">
    <property type="entry name" value="Ribosomal protein L16p/L10e"/>
    <property type="match status" value="1"/>
</dbReference>
<dbReference type="PROSITE" id="PS00586">
    <property type="entry name" value="RIBOSOMAL_L16_1"/>
    <property type="match status" value="1"/>
</dbReference>
<dbReference type="PROSITE" id="PS00701">
    <property type="entry name" value="RIBOSOMAL_L16_2"/>
    <property type="match status" value="1"/>
</dbReference>
<reference key="1">
    <citation type="journal article" date="2013" name="Plant Physiol.">
        <title>A Nostoc punctiforme Sugar Transporter Necessary to Establish a Cyanobacterium-Plant Symbiosis.</title>
        <authorList>
            <person name="Ekman M."/>
            <person name="Picossi S."/>
            <person name="Campbell E.L."/>
            <person name="Meeks J.C."/>
            <person name="Flores E."/>
        </authorList>
    </citation>
    <scope>NUCLEOTIDE SEQUENCE [LARGE SCALE GENOMIC DNA]</scope>
    <source>
        <strain>ATCC 29133 / PCC 73102</strain>
    </source>
</reference>
<evidence type="ECO:0000255" key="1">
    <source>
        <dbReference type="HAMAP-Rule" id="MF_01342"/>
    </source>
</evidence>
<evidence type="ECO:0000305" key="2"/>
<accession>B2ITP8</accession>
<proteinExistence type="inferred from homology"/>